<dbReference type="EC" id="3.11.1.2"/>
<dbReference type="EMBL" id="L49465">
    <property type="protein sequence ID" value="AAC15507.1"/>
    <property type="molecule type" value="Genomic_DNA"/>
</dbReference>
<dbReference type="EMBL" id="AJ969111">
    <property type="protein sequence ID" value="CAI93864.1"/>
    <property type="molecule type" value="Genomic_DNA"/>
</dbReference>
<dbReference type="PIR" id="S63510">
    <property type="entry name" value="S63510"/>
</dbReference>
<dbReference type="PDB" id="1EI6">
    <property type="method" value="X-ray"/>
    <property type="resolution" value="2.10 A"/>
    <property type="chains" value="A/B/C/D=2-407"/>
</dbReference>
<dbReference type="PDBsum" id="1EI6"/>
<dbReference type="SMR" id="Q51782"/>
<dbReference type="DrugBank" id="DB01694">
    <property type="generic name" value="D-tartaric acid"/>
</dbReference>
<dbReference type="KEGG" id="ag:AAC15507"/>
<dbReference type="BioCyc" id="MetaCyc:MONOMER-202"/>
<dbReference type="BRENDA" id="3.11.1.2">
    <property type="organism ID" value="5121"/>
</dbReference>
<dbReference type="EvolutionaryTrace" id="Q51782"/>
<dbReference type="GO" id="GO:0046872">
    <property type="term" value="F:metal ion binding"/>
    <property type="evidence" value="ECO:0007669"/>
    <property type="project" value="UniProtKB-KW"/>
</dbReference>
<dbReference type="GO" id="GO:0047400">
    <property type="term" value="F:phosphonoacetate hydrolase activity"/>
    <property type="evidence" value="ECO:0000314"/>
    <property type="project" value="UniProtKB"/>
</dbReference>
<dbReference type="GO" id="GO:0019636">
    <property type="term" value="P:phosphonoacetate metabolic process"/>
    <property type="evidence" value="ECO:0000314"/>
    <property type="project" value="UniProtKB"/>
</dbReference>
<dbReference type="CDD" id="cd16018">
    <property type="entry name" value="Enpp"/>
    <property type="match status" value="1"/>
</dbReference>
<dbReference type="Gene3D" id="3.40.720.10">
    <property type="entry name" value="Alkaline Phosphatase, subunit A"/>
    <property type="match status" value="1"/>
</dbReference>
<dbReference type="Gene3D" id="3.30.1360.110">
    <property type="entry name" value="Domain 2, Phosphonoacetate Hydrolase"/>
    <property type="match status" value="1"/>
</dbReference>
<dbReference type="InterPro" id="IPR017850">
    <property type="entry name" value="Alkaline_phosphatase_core_sf"/>
</dbReference>
<dbReference type="InterPro" id="IPR002591">
    <property type="entry name" value="Phosphodiest/P_Trfase"/>
</dbReference>
<dbReference type="InterPro" id="IPR012710">
    <property type="entry name" value="Phosphonoacetate_hydro"/>
</dbReference>
<dbReference type="InterPro" id="IPR023116">
    <property type="entry name" value="Phosphonoacetate_hydro_insert"/>
</dbReference>
<dbReference type="NCBIfam" id="TIGR02335">
    <property type="entry name" value="hydr_PhnA"/>
    <property type="match status" value="1"/>
</dbReference>
<dbReference type="PANTHER" id="PTHR10151:SF120">
    <property type="entry name" value="BIS(5'-ADENOSYL)-TRIPHOSPHATASE"/>
    <property type="match status" value="1"/>
</dbReference>
<dbReference type="PANTHER" id="PTHR10151">
    <property type="entry name" value="ECTONUCLEOTIDE PYROPHOSPHATASE/PHOSPHODIESTERASE"/>
    <property type="match status" value="1"/>
</dbReference>
<dbReference type="Pfam" id="PF01663">
    <property type="entry name" value="Phosphodiest"/>
    <property type="match status" value="1"/>
</dbReference>
<dbReference type="SUPFAM" id="SSF53649">
    <property type="entry name" value="Alkaline phosphatase-like"/>
    <property type="match status" value="1"/>
</dbReference>
<keyword id="KW-0002">3D-structure</keyword>
<keyword id="KW-0903">Direct protein sequencing</keyword>
<keyword id="KW-0378">Hydrolase</keyword>
<keyword id="KW-0479">Metal-binding</keyword>
<keyword id="KW-0862">Zinc</keyword>
<feature type="initiator methionine" description="Removed" evidence="2">
    <location>
        <position position="1"/>
    </location>
</feature>
<feature type="chain" id="PRO_0000402579" description="Phosphonoacetate hydrolase" evidence="2">
    <location>
        <begin position="2"/>
        <end position="407"/>
    </location>
</feature>
<feature type="binding site" evidence="4">
    <location>
        <position position="25"/>
    </location>
    <ligand>
        <name>Zn(2+)</name>
        <dbReference type="ChEBI" id="CHEBI:29105"/>
        <label>1</label>
    </ligand>
</feature>
<feature type="binding site" evidence="4">
    <location>
        <position position="64"/>
    </location>
    <ligand>
        <name>substrate</name>
    </ligand>
</feature>
<feature type="binding site" evidence="4">
    <location>
        <position position="64"/>
    </location>
    <ligand>
        <name>Zn(2+)</name>
        <dbReference type="ChEBI" id="CHEBI:29105"/>
        <label>1</label>
    </ligand>
</feature>
<feature type="binding site" evidence="4">
    <location>
        <position position="202"/>
    </location>
    <ligand>
        <name>substrate</name>
    </ligand>
</feature>
<feature type="binding site" evidence="4">
    <location>
        <position position="202"/>
    </location>
    <ligand>
        <name>Zn(2+)</name>
        <dbReference type="ChEBI" id="CHEBI:29105"/>
        <label>2</label>
    </ligand>
</feature>
<feature type="binding site" evidence="4">
    <location>
        <position position="206"/>
    </location>
    <ligand>
        <name>Zn(2+)</name>
        <dbReference type="ChEBI" id="CHEBI:29105"/>
        <label>2</label>
    </ligand>
</feature>
<feature type="binding site" evidence="4">
    <location>
        <position position="241"/>
    </location>
    <ligand>
        <name>Zn(2+)</name>
        <dbReference type="ChEBI" id="CHEBI:29105"/>
        <label>1</label>
    </ligand>
</feature>
<feature type="binding site" evidence="4">
    <location>
        <position position="242"/>
    </location>
    <ligand>
        <name>substrate</name>
    </ligand>
</feature>
<feature type="binding site" evidence="4">
    <location>
        <position position="242"/>
    </location>
    <ligand>
        <name>Zn(2+)</name>
        <dbReference type="ChEBI" id="CHEBI:29105"/>
        <label>1</label>
    </ligand>
</feature>
<feature type="binding site" evidence="4">
    <location>
        <position position="368"/>
    </location>
    <ligand>
        <name>substrate</name>
    </ligand>
</feature>
<feature type="binding site" evidence="4">
    <location>
        <position position="368"/>
    </location>
    <ligand>
        <name>Zn(2+)</name>
        <dbReference type="ChEBI" id="CHEBI:29105"/>
        <label>2</label>
    </ligand>
</feature>
<feature type="sequence conflict" description="In Ref. 2; CAI93864." evidence="5" ref="2">
    <original>S</original>
    <variation>N</variation>
    <location>
        <position position="6"/>
    </location>
</feature>
<feature type="sequence conflict" description="In Ref. 2; CAI93864." evidence="5" ref="2">
    <original>A</original>
    <variation>T</variation>
    <location>
        <position position="265"/>
    </location>
</feature>
<feature type="sequence conflict" description="In Ref. 2; CAI93864." evidence="5" ref="2">
    <original>F</original>
    <variation>V</variation>
    <location>
        <position position="380"/>
    </location>
</feature>
<feature type="strand" evidence="8">
    <location>
        <begin position="4"/>
        <end position="7"/>
    </location>
</feature>
<feature type="strand" evidence="8">
    <location>
        <begin position="10"/>
        <end position="13"/>
    </location>
</feature>
<feature type="strand" evidence="8">
    <location>
        <begin position="19"/>
        <end position="23"/>
    </location>
</feature>
<feature type="helix" evidence="8">
    <location>
        <begin position="29"/>
        <end position="37"/>
    </location>
</feature>
<feature type="helix" evidence="8">
    <location>
        <begin position="42"/>
        <end position="46"/>
    </location>
</feature>
<feature type="helix" evidence="8">
    <location>
        <begin position="47"/>
        <end position="49"/>
    </location>
</feature>
<feature type="strand" evidence="8">
    <location>
        <begin position="51"/>
        <end position="57"/>
    </location>
</feature>
<feature type="helix" evidence="8">
    <location>
        <begin position="64"/>
        <end position="73"/>
    </location>
</feature>
<feature type="helix" evidence="8">
    <location>
        <begin position="77"/>
        <end position="80"/>
    </location>
</feature>
<feature type="strand" evidence="8">
    <location>
        <begin position="84"/>
        <end position="89"/>
    </location>
</feature>
<feature type="turn" evidence="8">
    <location>
        <begin position="90"/>
        <end position="93"/>
    </location>
</feature>
<feature type="strand" evidence="8">
    <location>
        <begin position="94"/>
        <end position="97"/>
    </location>
</feature>
<feature type="helix" evidence="8">
    <location>
        <begin position="101"/>
        <end position="103"/>
    </location>
</feature>
<feature type="helix" evidence="8">
    <location>
        <begin position="109"/>
        <end position="115"/>
    </location>
</feature>
<feature type="strand" evidence="8">
    <location>
        <begin position="120"/>
        <end position="126"/>
    </location>
</feature>
<feature type="helix" evidence="8">
    <location>
        <begin position="127"/>
        <end position="133"/>
    </location>
</feature>
<feature type="turn" evidence="8">
    <location>
        <begin position="134"/>
        <end position="136"/>
    </location>
</feature>
<feature type="strand" evidence="8">
    <location>
        <begin position="139"/>
        <end position="144"/>
    </location>
</feature>
<feature type="helix" evidence="8">
    <location>
        <begin position="152"/>
        <end position="155"/>
    </location>
</feature>
<feature type="helix" evidence="8">
    <location>
        <begin position="160"/>
        <end position="164"/>
    </location>
</feature>
<feature type="strand" evidence="8">
    <location>
        <begin position="171"/>
        <end position="173"/>
    </location>
</feature>
<feature type="helix" evidence="8">
    <location>
        <begin position="175"/>
        <end position="189"/>
    </location>
</feature>
<feature type="strand" evidence="8">
    <location>
        <begin position="194"/>
        <end position="199"/>
    </location>
</feature>
<feature type="helix" evidence="8">
    <location>
        <begin position="203"/>
        <end position="207"/>
    </location>
</feature>
<feature type="helix" evidence="8">
    <location>
        <begin position="213"/>
        <end position="231"/>
    </location>
</feature>
<feature type="strand" evidence="8">
    <location>
        <begin position="235"/>
        <end position="239"/>
    </location>
</feature>
<feature type="strand" evidence="8">
    <location>
        <begin position="256"/>
        <end position="258"/>
    </location>
</feature>
<feature type="helix" evidence="8">
    <location>
        <begin position="259"/>
        <end position="267"/>
    </location>
</feature>
<feature type="strand" evidence="8">
    <location>
        <begin position="271"/>
        <end position="275"/>
    </location>
</feature>
<feature type="helix" evidence="8">
    <location>
        <begin position="286"/>
        <end position="288"/>
    </location>
</feature>
<feature type="strand" evidence="8">
    <location>
        <begin position="290"/>
        <end position="297"/>
    </location>
</feature>
<feature type="helix" evidence="8">
    <location>
        <begin position="303"/>
        <end position="311"/>
    </location>
</feature>
<feature type="strand" evidence="8">
    <location>
        <begin position="316"/>
        <end position="321"/>
    </location>
</feature>
<feature type="helix" evidence="8">
    <location>
        <begin position="322"/>
        <end position="329"/>
    </location>
</feature>
<feature type="helix" evidence="8">
    <location>
        <begin position="333"/>
        <end position="335"/>
    </location>
</feature>
<feature type="strand" evidence="8">
    <location>
        <begin position="338"/>
        <end position="343"/>
    </location>
</feature>
<feature type="strand" evidence="8">
    <location>
        <begin position="348"/>
        <end position="351"/>
    </location>
</feature>
<feature type="turn" evidence="8">
    <location>
        <begin position="353"/>
        <end position="355"/>
    </location>
</feature>
<feature type="helix" evidence="8">
    <location>
        <begin position="358"/>
        <end position="360"/>
    </location>
</feature>
<feature type="helix" evidence="8">
    <location>
        <begin position="371"/>
        <end position="373"/>
    </location>
</feature>
<feature type="strand" evidence="8">
    <location>
        <begin position="375"/>
        <end position="382"/>
    </location>
</feature>
<feature type="helix" evidence="8">
    <location>
        <begin position="395"/>
        <end position="397"/>
    </location>
</feature>
<feature type="helix" evidence="8">
    <location>
        <begin position="398"/>
        <end position="404"/>
    </location>
</feature>
<evidence type="ECO:0000269" key="1">
    <source>
    </source>
</evidence>
<evidence type="ECO:0000269" key="2">
    <source>
    </source>
</evidence>
<evidence type="ECO:0000269" key="3">
    <source>
    </source>
</evidence>
<evidence type="ECO:0000269" key="4">
    <source ref="5"/>
</evidence>
<evidence type="ECO:0000305" key="5"/>
<evidence type="ECO:0000312" key="6">
    <source>
        <dbReference type="EMBL" id="AAC15507.1"/>
    </source>
</evidence>
<evidence type="ECO:0000312" key="7">
    <source>
        <dbReference type="EMBL" id="CAI93864.1"/>
    </source>
</evidence>
<evidence type="ECO:0007829" key="8">
    <source>
        <dbReference type="PDB" id="1EI6"/>
    </source>
</evidence>
<comment type="function">
    <text evidence="1">Specifically hydrolyzes phosphonoacetate. Does not have activity on other organophosphonates or acetates.</text>
</comment>
<comment type="catalytic activity">
    <reaction evidence="1 2 3">
        <text>phosphonoacetate + H2O = acetate + phosphate + H(+)</text>
        <dbReference type="Rhea" id="RHEA:16749"/>
        <dbReference type="ChEBI" id="CHEBI:15377"/>
        <dbReference type="ChEBI" id="CHEBI:15378"/>
        <dbReference type="ChEBI" id="CHEBI:30089"/>
        <dbReference type="ChEBI" id="CHEBI:43474"/>
        <dbReference type="ChEBI" id="CHEBI:57488"/>
        <dbReference type="EC" id="3.11.1.2"/>
    </reaction>
</comment>
<comment type="cofactor">
    <cofactor evidence="2 4">
        <name>Zn(2+)</name>
        <dbReference type="ChEBI" id="CHEBI:29105"/>
    </cofactor>
    <text evidence="2 4">Binds 2 Zn(2+) ions per subunit.</text>
</comment>
<comment type="activity regulation">
    <text evidence="1 2">Completely inhibited by EDTA and 1,10-phenanthroline. Moderately inhibited by the phosphonocarboxylic acids phosphonoformate and 3-phosphonopropionate and the phosphonate herbicide glyphosate. Partially inhibited by the reducing agents sodium sulfide and dithiotheitol and the chelating agent iminodiacetate. Nonphosphonate analogs of phosphonoacetate, such as arsonoacetate, sulfonoacetate and malonate are poor inhibitors. Inorganic phosphate, acetate and the known phosphonotase inhibitor phosphite have little effect on activity. Not inhibited by the alkylphosphonic acids methylphosphonate and ethylphosphonate, or the aminoalkylphosphonates 2-aminoethylphosphonate, 3-aminopropylphosphonate and 4-aminobutylphosphonate. Fe(3+), Ca(2+), Mg(2+) and Cs(+) have no effect on activity. Activity is slightly increased by the aminoalkylphosphonates 1-aminoethylphosphonate, 1-aminobutylphosphonate, 2-amino-4-butylphosphonate. Activity is increased by Zn(2+), Mn(2+) and Co(2+), these 3 metal ions also allow recovery of activity after EDTA treatment.</text>
</comment>
<comment type="biophysicochemical properties">
    <kinetics>
        <KM evidence="2">1.25 mM for phosphonoacetate</KM>
        <Vmax evidence="2">1.25 umol/min/mg enzyme</Vmax>
    </kinetics>
    <phDependence>
        <text evidence="2">Optimum pH is approximately 7.8.</text>
    </phDependence>
    <temperatureDependence>
        <text evidence="2">Optimum temperature is 37 degrees Celsius. Activity is rapidly lost after incubation for 30 minutes above 40 degrees Celsius.</text>
    </temperatureDependence>
</comment>
<comment type="subunit">
    <text evidence="2">Homodimer.</text>
</comment>
<comment type="induction">
    <text evidence="1">By phosphonoacetate.</text>
</comment>
<comment type="similarity">
    <text evidence="5">Belongs to the alkaline phosphatase family. PhnA subfamily.</text>
</comment>
<reference evidence="6" key="1">
    <citation type="journal article" date="1997" name="Gene">
        <title>Cloning of the phosphonoacetate hydrolase gene from Pseudomonas fluorescens 23F encoding a new type of carbon-phosphorus bond cleaving enzyme and its expression in Escherichia coli and Pseudomonas putida.</title>
        <authorList>
            <person name="Kulakova A.N."/>
            <person name="Kulakov L.A."/>
            <person name="Quinn J.P."/>
        </authorList>
    </citation>
    <scope>NUCLEOTIDE SEQUENCE [GENOMIC DNA]</scope>
    <scope>CATALYTIC ACTIVITY</scope>
    <source>
        <strain evidence="6">23F</strain>
    </source>
</reference>
<reference evidence="5 7" key="2">
    <citation type="journal article" date="2006" name="Environ. Microbiol.">
        <title>Detection of phosphonoacetate degradation and phnA genes in soil bacteria from distinct geographical origins suggest its possible biogenic origin.</title>
        <authorList>
            <person name="Panas P."/>
            <person name="Ternan N.G."/>
            <person name="Dooley J.S."/>
            <person name="McMullan G."/>
        </authorList>
    </citation>
    <scope>NUCLEOTIDE SEQUENCE [GENOMIC DNA]</scope>
    <source>
        <strain evidence="7">R3e</strain>
    </source>
</reference>
<reference evidence="5" key="3">
    <citation type="journal article" date="1995" name="Eur. J. Biochem.">
        <title>The purification and properties of phosphonoacetate hydrolase, a novel carbon-phosphorus bond-cleavage enzyme from Pseudomonas fluorescens 23F.</title>
        <authorList>
            <person name="McGrath J.W."/>
            <person name="Wisdom G.B."/>
            <person name="McMullan G."/>
            <person name="Larkin M.J."/>
            <person name="Quinn J.P."/>
        </authorList>
    </citation>
    <scope>PROTEIN SEQUENCE OF 2-20</scope>
    <scope>CATALYTIC ACTIVITY</scope>
    <scope>COFACTOR</scope>
    <scope>ACTIVITY REGULATION</scope>
    <scope>BIOPHYSICOCHEMICAL PROPERTIES</scope>
    <scope>SUBUNIT</scope>
    <source>
        <strain evidence="2">23F</strain>
    </source>
</reference>
<reference evidence="5" key="4">
    <citation type="journal article" date="1994" name="J. Bacteriol.">
        <title>In vitro characterization of a phosphate starvation-independent carbon-phosphorus bond cleavage activity in Pseudomonas fluorescens 23F.</title>
        <authorList>
            <person name="McMullan G."/>
            <person name="Quinn J.P."/>
        </authorList>
    </citation>
    <scope>FUNCTION</scope>
    <scope>CATALYTIC ACTIVITY</scope>
    <scope>ACTIVITY REGULATION</scope>
    <scope>INDUCTION</scope>
    <source>
        <strain evidence="1">23F</strain>
    </source>
</reference>
<reference evidence="5" key="5">
    <citation type="submission" date="2000-02" db="PDB data bank">
        <title>Crystal structure of phosphonoacetate hydrolase complexed with phosphonoformate.</title>
        <authorList>
            <person name="Holden H.M."/>
            <person name="Benning M.M."/>
            <person name="Dunaway-Mariano D."/>
            <person name="Kim A.D."/>
        </authorList>
    </citation>
    <scope>X-RAY CRYSTALLOGRAPHY (2.10 ANGSTROMS) OF 4-407</scope>
    <scope>ZINC-BINDING</scope>
    <source>
        <strain evidence="4">23F</strain>
    </source>
</reference>
<name>PHNHY_PSEFL</name>
<sequence>MTQLISVNSRSYRLSSAPTIVICVDGCEQEYINQAIQAGQAPFLAELTGFGTVLTGDCVVPSFTNPNNLSIVTGAPPSVHGICGNFFFDQETQEEVLMNDAKYLRAPTILAEMAKAGQLVAVVTAKDKLRNLLGHQLKGICFSAEKADQVNLEEHGVENILARVGMPVPSVYSADLSEFVFAAGLSLLTNERPDFMYLSTTDYVQHKHAPGTPEANAFYAMMDSYFKRYHEQGAIVAITADHGMNAKTDAIGRPNILFLQDLLDAQYGAQRTRVLLPITDPYVVHHGALGSYATVYLRDAVPQRDAIDFLAGIAGVEAVLTRSQACQRFELPEDRIGDLVVLGERLTVLGSAADKHDLSGLTVPLRSHGGVSEQKVPLIFNRKLVGLDSPGRLRNFDIIDLALNHLA</sequence>
<protein>
    <recommendedName>
        <fullName evidence="6">Phosphonoacetate hydrolase</fullName>
        <ecNumber>3.11.1.2</ecNumber>
    </recommendedName>
</protein>
<accession>Q51782</accession>
<accession>Q50HR7</accession>
<accession>Q9R4G3</accession>
<proteinExistence type="evidence at protein level"/>
<gene>
    <name evidence="6" type="primary">phnA</name>
</gene>
<organism>
    <name type="scientific">Pseudomonas fluorescens</name>
    <dbReference type="NCBI Taxonomy" id="294"/>
    <lineage>
        <taxon>Bacteria</taxon>
        <taxon>Pseudomonadati</taxon>
        <taxon>Pseudomonadota</taxon>
        <taxon>Gammaproteobacteria</taxon>
        <taxon>Pseudomonadales</taxon>
        <taxon>Pseudomonadaceae</taxon>
        <taxon>Pseudomonas</taxon>
    </lineage>
</organism>